<name>VME1_CVBEN</name>
<keyword id="KW-0325">Glycoprotein</keyword>
<keyword id="KW-1040">Host Golgi apparatus</keyword>
<keyword id="KW-1043">Host membrane</keyword>
<keyword id="KW-0945">Host-virus interaction</keyword>
<keyword id="KW-0472">Membrane</keyword>
<keyword id="KW-0812">Transmembrane</keyword>
<keyword id="KW-1133">Transmembrane helix</keyword>
<keyword id="KW-0261">Viral envelope protein</keyword>
<keyword id="KW-0899">Viral immunoevasion</keyword>
<keyword id="KW-0468">Viral matrix protein</keyword>
<keyword id="KW-0946">Virion</keyword>
<sequence length="230" mass="26326">MSSVTTPAPVYTWTADEAIKFLKEWNFSLGIILLFITVILQFGYTSRSMFVYVIKMVILWLMWPLTIILTIFNCVYALNNVYLGFSIVFTIVAIIMWIVYFVNSIRLFIRTGSWWSFNPETNNLMCIDMKGRMYVRPIIEDYHTLTVTIIRGHLYMQGIKLGTGYSLSDLPAYVTVAKVSHLLTYKRGFLDKIGDTSGFAVYVKSKVGNYRLPSTQKGSGLDTALLRNNI</sequence>
<reference key="1">
    <citation type="journal article" date="2001" name="J. Gen. Virol.">
        <title>Comparison of genomic and predicted amino acid sequences of respiratory and enteric bovine coronaviruses isolated from the same animal with fatal shipping pneumonia.</title>
        <authorList>
            <person name="Chouljenko V.N."/>
            <person name="Lin X.Q."/>
            <person name="Storz J."/>
            <person name="Kousoulas K.G."/>
            <person name="Gorbalenya A.E."/>
        </authorList>
    </citation>
    <scope>NUCLEOTIDE SEQUENCE [GENOMIC RNA]</scope>
</reference>
<protein>
    <recommendedName>
        <fullName evidence="1">Membrane protein</fullName>
        <shortName evidence="1">M protein</shortName>
    </recommendedName>
    <alternativeName>
        <fullName evidence="1">E1 glycoprotein</fullName>
    </alternativeName>
    <alternativeName>
        <fullName evidence="1">Matrix glycoprotein</fullName>
    </alternativeName>
    <alternativeName>
        <fullName evidence="1">Membrane glycoprotein</fullName>
    </alternativeName>
</protein>
<proteinExistence type="inferred from homology"/>
<organismHost>
    <name type="scientific">Bos taurus</name>
    <name type="common">Bovine</name>
    <dbReference type="NCBI Taxonomy" id="9913"/>
</organismHost>
<comment type="function">
    <text evidence="1 2">Component of the viral envelope that plays a central role in virus morphogenesis and assembly via its interactions with other viral proteins.</text>
</comment>
<comment type="subunit">
    <text evidence="1 2">Homomultimer. Interacts with envelope E protein in the budding compartment of the host cell, which is located between endoplasmic reticulum and the Golgi complex. Forms a complex with HE and S proteins. Interacts with nucleocapsid N protein. This interaction probably participates in RNA packaging into the virus.</text>
</comment>
<comment type="subcellular location">
    <subcellularLocation>
        <location evidence="1">Virion membrane</location>
        <topology evidence="1">Multi-pass membrane protein</topology>
    </subcellularLocation>
    <subcellularLocation>
        <location evidence="1">Host Golgi apparatus membrane</location>
        <topology evidence="1">Multi-pass membrane protein</topology>
    </subcellularLocation>
    <text evidence="1">Largely embedded in the lipid bilayer.</text>
</comment>
<comment type="similarity">
    <text evidence="1">Belongs to the betacoronaviruses M protein family.</text>
</comment>
<organism>
    <name type="scientific">Bovine coronavirus (strain 98TXSF-110-ENT)</name>
    <name type="common">BCoV-ENT</name>
    <name type="synonym">BCV</name>
    <dbReference type="NCBI Taxonomy" id="233262"/>
    <lineage>
        <taxon>Viruses</taxon>
        <taxon>Riboviria</taxon>
        <taxon>Orthornavirae</taxon>
        <taxon>Pisuviricota</taxon>
        <taxon>Pisoniviricetes</taxon>
        <taxon>Nidovirales</taxon>
        <taxon>Cornidovirineae</taxon>
        <taxon>Coronaviridae</taxon>
        <taxon>Orthocoronavirinae</taxon>
        <taxon>Betacoronavirus</taxon>
        <taxon>Embecovirus</taxon>
        <taxon>Betacoronavirus 1</taxon>
    </lineage>
</organism>
<dbReference type="EMBL" id="AF391541">
    <property type="protein sequence ID" value="AAK83361.1"/>
    <property type="molecule type" value="Genomic_RNA"/>
</dbReference>
<dbReference type="RefSeq" id="NP_150082.1">
    <property type="nucleotide sequence ID" value="NC_003045.1"/>
</dbReference>
<dbReference type="SMR" id="Q91A23"/>
<dbReference type="GeneID" id="921686"/>
<dbReference type="KEGG" id="vg:921686"/>
<dbReference type="Proteomes" id="UP000008570">
    <property type="component" value="Segment"/>
</dbReference>
<dbReference type="GO" id="GO:0044178">
    <property type="term" value="C:host cell Golgi membrane"/>
    <property type="evidence" value="ECO:0007669"/>
    <property type="project" value="UniProtKB-SubCell"/>
</dbReference>
<dbReference type="GO" id="GO:0016020">
    <property type="term" value="C:membrane"/>
    <property type="evidence" value="ECO:0007669"/>
    <property type="project" value="UniProtKB-UniRule"/>
</dbReference>
<dbReference type="GO" id="GO:0019031">
    <property type="term" value="C:viral envelope"/>
    <property type="evidence" value="ECO:0007669"/>
    <property type="project" value="UniProtKB-UniRule"/>
</dbReference>
<dbReference type="GO" id="GO:0055036">
    <property type="term" value="C:virion membrane"/>
    <property type="evidence" value="ECO:0007669"/>
    <property type="project" value="UniProtKB-SubCell"/>
</dbReference>
<dbReference type="GO" id="GO:0039660">
    <property type="term" value="F:structural constituent of virion"/>
    <property type="evidence" value="ECO:0007669"/>
    <property type="project" value="UniProtKB-UniRule"/>
</dbReference>
<dbReference type="CDD" id="cd21568">
    <property type="entry name" value="HCoV-like_M"/>
    <property type="match status" value="1"/>
</dbReference>
<dbReference type="HAMAP" id="MF_04202">
    <property type="entry name" value="BETA_CORONA_M"/>
    <property type="match status" value="1"/>
</dbReference>
<dbReference type="InterPro" id="IPR002574">
    <property type="entry name" value="M_CoV"/>
</dbReference>
<dbReference type="InterPro" id="IPR044362">
    <property type="entry name" value="M_HCoV-like"/>
</dbReference>
<dbReference type="Pfam" id="PF01635">
    <property type="entry name" value="CoV_M"/>
    <property type="match status" value="1"/>
</dbReference>
<dbReference type="PROSITE" id="PS51927">
    <property type="entry name" value="COV_M"/>
    <property type="match status" value="1"/>
</dbReference>
<evidence type="ECO:0000255" key="1">
    <source>
        <dbReference type="HAMAP-Rule" id="MF_04202"/>
    </source>
</evidence>
<evidence type="ECO:0000255" key="2">
    <source>
        <dbReference type="PROSITE-ProRule" id="PRU01275"/>
    </source>
</evidence>
<feature type="chain" id="PRO_0000106024" description="Membrane protein">
    <location>
        <begin position="1"/>
        <end position="230"/>
    </location>
</feature>
<feature type="topological domain" description="Virion surface" evidence="1">
    <location>
        <begin position="1"/>
        <end position="24"/>
    </location>
</feature>
<feature type="transmembrane region" description="Helical" evidence="1">
    <location>
        <begin position="25"/>
        <end position="45"/>
    </location>
</feature>
<feature type="topological domain" description="Intravirion" evidence="1">
    <location>
        <begin position="46"/>
        <end position="55"/>
    </location>
</feature>
<feature type="transmembrane region" description="Helical" evidence="1">
    <location>
        <begin position="56"/>
        <end position="76"/>
    </location>
</feature>
<feature type="topological domain" description="Virion surface" evidence="1">
    <location>
        <begin position="77"/>
        <end position="84"/>
    </location>
</feature>
<feature type="transmembrane region" description="Helical" evidence="1">
    <location>
        <begin position="85"/>
        <end position="105"/>
    </location>
</feature>
<feature type="topological domain" description="Intravirion" evidence="1">
    <location>
        <begin position="106"/>
        <end position="228"/>
    </location>
</feature>
<accession>Q91A23</accession>
<gene>
    <name evidence="1" type="primary">M</name>
    <name type="ORF">6</name>
</gene>